<proteinExistence type="evidence at protein level"/>
<comment type="function">
    <text evidence="1 7 15">May play a role in actin reorganization. Links clathrin-mediated endocytosis to the actin cytoskeleton. May act as Rab effector protein and play a role in vesicle trafficking (PubMed:14676205, PubMed:27552051). Required for perinuclear sorting and insulin-regulated recycling of SLC2A4/GLUT4 in adipocytes (By similarity).</text>
</comment>
<comment type="subunit">
    <text evidence="1 7 10">Interacts with EHD1 (By similarity). Interacts with EHD2. Interacts with RAB8A, RAB10, RAB13 and RAB15 (in their GTP-bound forms); at least in case of RAB8A may bind 2 molecules of RAB8A simultaneously through a high and a low affinity binding site, respectively.</text>
</comment>
<comment type="subcellular location">
    <subcellularLocation>
        <location evidence="7">Cytoplasm</location>
    </subcellularLocation>
    <subcellularLocation>
        <location evidence="7">Membrane</location>
    </subcellularLocation>
    <subcellularLocation>
        <location evidence="15">Endosome</location>
    </subcellularLocation>
    <text>Mostly found in cytosol and plasma membrane.</text>
</comment>
<comment type="alternative products">
    <event type="alternative splicing"/>
    <isoform>
        <id>Q8NDI1-1</id>
        <name>1</name>
        <sequence type="displayed"/>
    </isoform>
    <isoform>
        <id>Q8NDI1-2</id>
        <name>2</name>
        <sequence type="described" ref="VSP_024834"/>
    </isoform>
    <isoform>
        <id>Q8NDI1-3</id>
        <name>3</name>
        <sequence type="described" ref="VSP_024834 VSP_024835"/>
    </isoform>
</comment>
<comment type="domain">
    <text evidence="10">The CAAX motif is a signal for prenylation and required for endosomal colocalization with Rab8 and Rab10.</text>
</comment>
<comment type="domain">
    <text evidence="10">The bivalent Mical/EHBP Rab binding (bMERB) domain, mediates binding to Rab8, Rab10, Rab10, Rab13 and Rab15 (in their GTP-bound forms).</text>
</comment>
<comment type="PTM">
    <text evidence="10">Prenylated (Probable). Farnelysation (predominant) and geranylgeranylation has been observed in vitro.</text>
</comment>
<comment type="disease" evidence="9">
    <disease id="DI-02661">
        <name>Prostate cancer, hereditary, 12</name>
        <acronym>HPC12</acronym>
        <description>A condition associated with familial predisposition to cancer of the prostate. Most prostate cancers are adenocarcinomas that develop in the acini of the prostatic ducts. Other rare histopathologic types of prostate cancer that occur in approximately 5% of patients include small cell carcinoma, mucinous carcinoma, prostatic ductal carcinoma, transitional cell carcinoma, squamous cell carcinoma, basal cell carcinoma, adenoid cystic carcinoma (basaloid), signet-ring cell carcinoma and neuroendocrine carcinoma.</description>
        <dbReference type="MIM" id="611868"/>
    </disease>
    <text>Disease susceptibility is associated with variants affecting the gene represented in this entry.</text>
</comment>
<comment type="sequence caution" evidence="14">
    <conflict type="miscellaneous discrepancy">
        <sequence resource="EMBL-CDS" id="BAA91391"/>
    </conflict>
    <text>Contaminating sequence. Potential poly-A sequence.</text>
</comment>
<keyword id="KW-0002">3D-structure</keyword>
<keyword id="KW-0025">Alternative splicing</keyword>
<keyword id="KW-0175">Coiled coil</keyword>
<keyword id="KW-0963">Cytoplasm</keyword>
<keyword id="KW-0254">Endocytosis</keyword>
<keyword id="KW-0967">Endosome</keyword>
<keyword id="KW-0449">Lipoprotein</keyword>
<keyword id="KW-0472">Membrane</keyword>
<keyword id="KW-0597">Phosphoprotein</keyword>
<keyword id="KW-0636">Prenylation</keyword>
<keyword id="KW-0653">Protein transport</keyword>
<keyword id="KW-1267">Proteomics identification</keyword>
<keyword id="KW-1185">Reference proteome</keyword>
<keyword id="KW-0813">Transport</keyword>
<accession>Q8NDI1</accession>
<accession>O94977</accession>
<accession>Q53TG7</accession>
<accession>Q53TV6</accession>
<accession>Q580X2</accession>
<accession>Q6NX72</accession>
<accession>Q6PIT3</accession>
<accession>Q6QNV2</accession>
<accession>Q9NWI9</accession>
<sequence>MASVWKRLQRVGKHASKFQFVASYQELMVECTKKWQPDKLVVVWTRRSRRKSSKAHSWQPGIKNPYRGVVVWPVPENIEITVTLFKDPHAEEFEDKEWTFVIENESPSGRRKALATSSINMKQYASPMPTQTDVKLKFKPLSKKVVSAALQFSLSCIFLREGKATDEDMQSLASLMSMKQADIGNLDDFEEDNEDDDENRVNQEEKAAKITEIVNQLNALSSLDEDQDDCIKQANMRSAKSASSSEELINKLNFLDEAEKDLATVNSNPFDDPDAAELNPFGDPDSEEPITETASPRKTEDSFYNNSYNPFKEVQTPQYLNPFDEPEAFVTIKDSPPQSTKRKNIRPVDMSKYLYADSSKTEEEELDESNPFYEPKSTPPPNNLVNPVQELETERRVKRKAPAPPVLSPKTGVLNENTVSAGKDLSTSPKPSPIPSPVLGRKPNASQSLLVWCKEVTKNYRGVKITNFTTSWRNGLSFCAILHHFRPDLIDYKSLNPQDIKENNKKAYDGFASIGISRLLEPSDMVLLAIPDKLTVMTYLYQIRAHFSGQELNVVQIEENSSKSTYKVGNYETDTNSSVDQEKFYAELSDLKREPELQQPISGAVDFLSQDDSVFVNDSGVGESESEHQTPDDHLSPSTASPYCRRTKSDTEPQKSQQSSGRTSGSDDPGICSNTDSTQAQVLLGKKRLLKAETLELSDLYVSDKKKDMSPPFICEETDEQKLQTLDIGSNLEKEKLENSRSLECRSDPESPIKKTSLSPTSKLGYSYSRDLDLAKKKHASLRQTESDPDADRTTLNHADHSSKIVQHRLLSRQEELKERARVLLEQARRDAALKAGNKHNTNTATPFCNRQLSDQQDEERRRQLRERARQLIAEARSGVKMSELPSYGEMAAEKLKERSKASGDENDNIEIDTNEEIPEGFVVGGGDELTNLENDLDTPEQNSKLVDLKLKKLLEVQPQVANSPSSAAQKAVTESSEQDMKSGTEDLRTERLQKTTERFRNPVVFSKDSTVRKTQLQSFSQYIENRPEMKRQRSIQEDTKKGNEEKAAITETQRKPSEDEVLNKGFKDTSQYVVGELAALENEQKQIDTRAALVEKRLRYLMDTGRNTEEEEAMMQEWFMLVNKKNALIRRMNQLSLLEKEHDLERRYELLNRELRAMLAIEDWQKTEAQKRREQLLLDELVALVNKRDALVRDLDAQEKQAEEEDEHLERTLEQNKGKMAKKEEKCVLQ</sequence>
<protein>
    <recommendedName>
        <fullName>EH domain-binding protein 1</fullName>
    </recommendedName>
</protein>
<evidence type="ECO:0000250" key="1">
    <source>
        <dbReference type="UniProtKB" id="Q69ZW3"/>
    </source>
</evidence>
<evidence type="ECO:0000255" key="2"/>
<evidence type="ECO:0000255" key="3">
    <source>
        <dbReference type="PROSITE-ProRule" id="PRU00044"/>
    </source>
</evidence>
<evidence type="ECO:0000255" key="4">
    <source>
        <dbReference type="PROSITE-ProRule" id="PRU01186"/>
    </source>
</evidence>
<evidence type="ECO:0000255" key="5">
    <source>
        <dbReference type="PROSITE-ProRule" id="PRU01195"/>
    </source>
</evidence>
<evidence type="ECO:0000256" key="6">
    <source>
        <dbReference type="SAM" id="MobiDB-lite"/>
    </source>
</evidence>
<evidence type="ECO:0000269" key="7">
    <source>
    </source>
</evidence>
<evidence type="ECO:0000269" key="8">
    <source>
    </source>
</evidence>
<evidence type="ECO:0000269" key="9">
    <source>
    </source>
</evidence>
<evidence type="ECO:0000269" key="10">
    <source>
    </source>
</evidence>
<evidence type="ECO:0000303" key="11">
    <source>
    </source>
</evidence>
<evidence type="ECO:0000303" key="12">
    <source>
    </source>
</evidence>
<evidence type="ECO:0000303" key="13">
    <source>
    </source>
</evidence>
<evidence type="ECO:0000305" key="14"/>
<evidence type="ECO:0000305" key="15">
    <source>
    </source>
</evidence>
<evidence type="ECO:0007744" key="16">
    <source>
    </source>
</evidence>
<evidence type="ECO:0007744" key="17">
    <source>
    </source>
</evidence>
<evidence type="ECO:0007744" key="18">
    <source>
    </source>
</evidence>
<evidence type="ECO:0007744" key="19">
    <source>
    </source>
</evidence>
<evidence type="ECO:0007744" key="20">
    <source>
    </source>
</evidence>
<evidence type="ECO:0007744" key="21">
    <source>
    </source>
</evidence>
<evidence type="ECO:0007744" key="22">
    <source>
    </source>
</evidence>
<evidence type="ECO:0007829" key="23">
    <source>
        <dbReference type="PDB" id="2D89"/>
    </source>
</evidence>
<evidence type="ECO:0007829" key="24">
    <source>
        <dbReference type="PDB" id="6ZSH"/>
    </source>
</evidence>
<evidence type="ECO:0007829" key="25">
    <source>
        <dbReference type="PDB" id="6ZSI"/>
    </source>
</evidence>
<feature type="chain" id="PRO_0000285202" description="EH domain-binding protein 1">
    <location>
        <begin position="1"/>
        <end position="1231"/>
    </location>
</feature>
<feature type="domain" description="C2 NT-type" evidence="4">
    <location>
        <begin position="8"/>
        <end position="158"/>
    </location>
</feature>
<feature type="domain" description="Calponin-homology (CH)" evidence="3">
    <location>
        <begin position="443"/>
        <end position="548"/>
    </location>
</feature>
<feature type="domain" description="bMERB" evidence="5">
    <location>
        <begin position="1056"/>
        <end position="1212"/>
    </location>
</feature>
<feature type="region of interest" description="Disordered" evidence="6">
    <location>
        <begin position="264"/>
        <end position="318"/>
    </location>
</feature>
<feature type="region of interest" description="Disordered" evidence="6">
    <location>
        <begin position="358"/>
        <end position="440"/>
    </location>
</feature>
<feature type="region of interest" description="Disordered" evidence="6">
    <location>
        <begin position="616"/>
        <end position="675"/>
    </location>
</feature>
<feature type="region of interest" description="Disordered" evidence="6">
    <location>
        <begin position="737"/>
        <end position="764"/>
    </location>
</feature>
<feature type="region of interest" description="Disordered" evidence="6">
    <location>
        <begin position="777"/>
        <end position="800"/>
    </location>
</feature>
<feature type="region of interest" description="Disordered" evidence="6">
    <location>
        <begin position="837"/>
        <end position="865"/>
    </location>
</feature>
<feature type="region of interest" description="Disordered" evidence="6">
    <location>
        <begin position="895"/>
        <end position="941"/>
    </location>
</feature>
<feature type="region of interest" description="Disordered" evidence="6">
    <location>
        <begin position="960"/>
        <end position="996"/>
    </location>
</feature>
<feature type="region of interest" description="Disordered" evidence="6">
    <location>
        <begin position="1025"/>
        <end position="1065"/>
    </location>
</feature>
<feature type="region of interest" description="Disordered" evidence="6">
    <location>
        <begin position="1198"/>
        <end position="1231"/>
    </location>
</feature>
<feature type="coiled-coil region" evidence="2">
    <location>
        <begin position="185"/>
        <end position="210"/>
    </location>
</feature>
<feature type="coiled-coil region" evidence="2">
    <location>
        <begin position="808"/>
        <end position="879"/>
    </location>
</feature>
<feature type="coiled-coil region" evidence="2">
    <location>
        <begin position="1076"/>
        <end position="1100"/>
    </location>
</feature>
<feature type="coiled-coil region" evidence="2">
    <location>
        <begin position="1136"/>
        <end position="1230"/>
    </location>
</feature>
<feature type="short sequence motif" description="CAAX motif" evidence="15">
    <location>
        <begin position="1228"/>
        <end position="1231"/>
    </location>
</feature>
<feature type="compositionally biased region" description="Polar residues" evidence="6">
    <location>
        <begin position="302"/>
        <end position="318"/>
    </location>
</feature>
<feature type="compositionally biased region" description="Basic and acidic residues" evidence="6">
    <location>
        <begin position="625"/>
        <end position="635"/>
    </location>
</feature>
<feature type="compositionally biased region" description="Polar residues" evidence="6">
    <location>
        <begin position="654"/>
        <end position="675"/>
    </location>
</feature>
<feature type="compositionally biased region" description="Basic and acidic residues" evidence="6">
    <location>
        <begin position="737"/>
        <end position="753"/>
    </location>
</feature>
<feature type="compositionally biased region" description="Polar residues" evidence="6">
    <location>
        <begin position="754"/>
        <end position="764"/>
    </location>
</feature>
<feature type="compositionally biased region" description="Basic and acidic residues" evidence="6">
    <location>
        <begin position="790"/>
        <end position="800"/>
    </location>
</feature>
<feature type="compositionally biased region" description="Polar residues" evidence="6">
    <location>
        <begin position="839"/>
        <end position="849"/>
    </location>
</feature>
<feature type="compositionally biased region" description="Basic and acidic residues" evidence="6">
    <location>
        <begin position="895"/>
        <end position="904"/>
    </location>
</feature>
<feature type="compositionally biased region" description="Acidic residues" evidence="6">
    <location>
        <begin position="905"/>
        <end position="919"/>
    </location>
</feature>
<feature type="compositionally biased region" description="Polar residues" evidence="6">
    <location>
        <begin position="960"/>
        <end position="976"/>
    </location>
</feature>
<feature type="compositionally biased region" description="Basic and acidic residues" evidence="6">
    <location>
        <begin position="979"/>
        <end position="996"/>
    </location>
</feature>
<feature type="compositionally biased region" description="Basic and acidic residues" evidence="6">
    <location>
        <begin position="1026"/>
        <end position="1065"/>
    </location>
</feature>
<feature type="compositionally biased region" description="Basic and acidic residues" evidence="6">
    <location>
        <begin position="1209"/>
        <end position="1231"/>
    </location>
</feature>
<feature type="modified residue" description="Phosphoserine" evidence="17 18 19 21">
    <location>
        <position position="171"/>
    </location>
</feature>
<feature type="modified residue" description="Phosphoserine" evidence="17 18 19">
    <location>
        <position position="174"/>
    </location>
</feature>
<feature type="modified residue" description="Phosphoserine" evidence="17">
    <location>
        <position position="177"/>
    </location>
</feature>
<feature type="modified residue" description="Phosphoserine" evidence="1">
    <location>
        <position position="222"/>
    </location>
</feature>
<feature type="modified residue" description="Phosphoserine" evidence="21">
    <location>
        <position position="302"/>
    </location>
</feature>
<feature type="modified residue" description="Phosphoserine" evidence="21">
    <location>
        <position position="307"/>
    </location>
</feature>
<feature type="modified residue" description="Phosphoserine" evidence="22">
    <location>
        <position position="335"/>
    </location>
</feature>
<feature type="modified residue" description="Phosphoserine" evidence="21">
    <location>
        <position position="408"/>
    </location>
</feature>
<feature type="modified residue" description="Phosphoserine" evidence="1">
    <location>
        <position position="426"/>
    </location>
</feature>
<feature type="modified residue" description="Phosphoserine" evidence="21">
    <location>
        <position position="428"/>
    </location>
</feature>
<feature type="modified residue" description="Phosphoserine" evidence="17 18 22">
    <location>
        <position position="432"/>
    </location>
</feature>
<feature type="modified residue" description="Phosphoserine" evidence="16 17 18 19 20 21 22">
    <location>
        <position position="436"/>
    </location>
</feature>
<feature type="modified residue" description="Phosphoserine" evidence="1">
    <location>
        <position position="636"/>
    </location>
</feature>
<feature type="modified residue" description="Phosphothreonine" evidence="21">
    <location>
        <position position="694"/>
    </location>
</feature>
<feature type="modified residue" description="Phosphoserine" evidence="17">
    <location>
        <position position="710"/>
    </location>
</feature>
<feature type="modified residue" description="Phosphoserine" evidence="21">
    <location>
        <position position="781"/>
    </location>
</feature>
<feature type="modified residue" description="Phosphoserine" evidence="22">
    <location>
        <position position="854"/>
    </location>
</feature>
<feature type="modified residue" description="Phosphoserine" evidence="17">
    <location>
        <position position="964"/>
    </location>
</feature>
<feature type="modified residue" description="Phosphoserine" evidence="17 20 21 22">
    <location>
        <position position="1058"/>
    </location>
</feature>
<feature type="splice variant" id="VSP_024834" description="In isoform 2 and isoform 3." evidence="11 12 13">
    <location>
        <begin position="212"/>
        <end position="246"/>
    </location>
</feature>
<feature type="splice variant" id="VSP_024835" description="In isoform 3." evidence="13">
    <location>
        <begin position="905"/>
        <end position="940"/>
    </location>
</feature>
<feature type="sequence variant" id="VAR_035913" description="In a breast cancer sample; somatic mutation." evidence="8">
    <original>R</original>
    <variation>T</variation>
    <location>
        <position position="395"/>
    </location>
</feature>
<feature type="sequence variant" id="VAR_031992" description="In dbSNP:rs17432615.">
    <original>K</original>
    <variation>Q</variation>
    <location>
        <position position="755"/>
    </location>
</feature>
<feature type="sequence conflict" description="In Ref. 5; AAH29477." evidence="14" ref="5">
    <original>E</original>
    <variation>V</variation>
    <location>
        <position position="105"/>
    </location>
</feature>
<feature type="sequence conflict" description="In Ref. 2; AAQ97141 and 3; CAD38814." evidence="14" ref="2 3">
    <original>K</original>
    <variation>R</variation>
    <location>
        <position position="112"/>
    </location>
</feature>
<feature type="sequence conflict" description="In Ref. 2; AAQ97141 and 3; CAD38814." evidence="14" ref="2 3">
    <original>E</original>
    <variation>G</variation>
    <location>
        <position position="212"/>
    </location>
</feature>
<feature type="sequence conflict" description="In Ref. 2; AAQ97141 and 3; CAD38814." evidence="14" ref="2 3">
    <original>D</original>
    <variation>V</variation>
    <location>
        <position position="256"/>
    </location>
</feature>
<feature type="sequence conflict" description="In Ref. 2; AAQ97141 and 3; CAD38814." evidence="14" ref="2 3">
    <original>R</original>
    <variation>G</variation>
    <location>
        <position position="342"/>
    </location>
</feature>
<feature type="helix" evidence="24">
    <location>
        <begin position="445"/>
        <end position="456"/>
    </location>
</feature>
<feature type="turn" evidence="24">
    <location>
        <begin position="457"/>
        <end position="459"/>
    </location>
</feature>
<feature type="strand" evidence="24">
    <location>
        <begin position="466"/>
        <end position="469"/>
    </location>
</feature>
<feature type="helix" evidence="24">
    <location>
        <begin position="470"/>
        <end position="472"/>
    </location>
</feature>
<feature type="helix" evidence="24">
    <location>
        <begin position="476"/>
        <end position="485"/>
    </location>
</feature>
<feature type="helix" evidence="24">
    <location>
        <begin position="487"/>
        <end position="489"/>
    </location>
</feature>
<feature type="helix" evidence="23">
    <location>
        <begin position="492"/>
        <end position="494"/>
    </location>
</feature>
<feature type="helix" evidence="24">
    <location>
        <begin position="500"/>
        <end position="513"/>
    </location>
</feature>
<feature type="helix" evidence="24">
    <location>
        <begin position="522"/>
        <end position="528"/>
    </location>
</feature>
<feature type="helix" evidence="24">
    <location>
        <begin position="533"/>
        <end position="547"/>
    </location>
</feature>
<feature type="helix" evidence="25">
    <location>
        <begin position="1076"/>
        <end position="1101"/>
    </location>
</feature>
<feature type="helix" evidence="25">
    <location>
        <begin position="1110"/>
        <end position="1160"/>
    </location>
</feature>
<feature type="helix" evidence="25">
    <location>
        <begin position="1164"/>
        <end position="1166"/>
    </location>
</feature>
<feature type="helix" evidence="25">
    <location>
        <begin position="1169"/>
        <end position="1198"/>
    </location>
</feature>
<feature type="turn" evidence="25">
    <location>
        <begin position="1199"/>
        <end position="1201"/>
    </location>
</feature>
<gene>
    <name type="primary">EHBP1</name>
    <name type="synonym">KIAA0903</name>
    <name type="synonym">NACSIN</name>
</gene>
<organism>
    <name type="scientific">Homo sapiens</name>
    <name type="common">Human</name>
    <dbReference type="NCBI Taxonomy" id="9606"/>
    <lineage>
        <taxon>Eukaryota</taxon>
        <taxon>Metazoa</taxon>
        <taxon>Chordata</taxon>
        <taxon>Craniata</taxon>
        <taxon>Vertebrata</taxon>
        <taxon>Euteleostomi</taxon>
        <taxon>Mammalia</taxon>
        <taxon>Eutheria</taxon>
        <taxon>Euarchontoglires</taxon>
        <taxon>Primates</taxon>
        <taxon>Haplorrhini</taxon>
        <taxon>Catarrhini</taxon>
        <taxon>Hominidae</taxon>
        <taxon>Homo</taxon>
    </lineage>
</organism>
<dbReference type="EMBL" id="AY531390">
    <property type="protein sequence ID" value="AAS48537.1"/>
    <property type="molecule type" value="mRNA"/>
</dbReference>
<dbReference type="EMBL" id="AY331186">
    <property type="protein sequence ID" value="AAQ97141.1"/>
    <property type="molecule type" value="mRNA"/>
</dbReference>
<dbReference type="EMBL" id="AL833968">
    <property type="protein sequence ID" value="CAD38814.1"/>
    <property type="molecule type" value="mRNA"/>
</dbReference>
<dbReference type="EMBL" id="AC007098">
    <property type="protein sequence ID" value="AAY14789.1"/>
    <property type="molecule type" value="Genomic_DNA"/>
</dbReference>
<dbReference type="EMBL" id="AC009501">
    <property type="protein sequence ID" value="AAY24356.1"/>
    <property type="molecule type" value="Genomic_DNA"/>
</dbReference>
<dbReference type="EMBL" id="AC092567">
    <property type="protein sequence ID" value="AAX82024.1"/>
    <property type="molecule type" value="Genomic_DNA"/>
</dbReference>
<dbReference type="EMBL" id="BC029477">
    <property type="protein sequence ID" value="AAH29477.1"/>
    <property type="molecule type" value="mRNA"/>
</dbReference>
<dbReference type="EMBL" id="BC067215">
    <property type="protein sequence ID" value="AAH67215.1"/>
    <property type="molecule type" value="mRNA"/>
</dbReference>
<dbReference type="EMBL" id="AK000828">
    <property type="protein sequence ID" value="BAA91391.1"/>
    <property type="status" value="ALT_SEQ"/>
    <property type="molecule type" value="mRNA"/>
</dbReference>
<dbReference type="EMBL" id="AB020710">
    <property type="protein sequence ID" value="BAA74926.1"/>
    <property type="molecule type" value="mRNA"/>
</dbReference>
<dbReference type="CCDS" id="CCDS1872.1">
    <molecule id="Q8NDI1-1"/>
</dbReference>
<dbReference type="CCDS" id="CCDS46299.1">
    <molecule id="Q8NDI1-2"/>
</dbReference>
<dbReference type="CCDS" id="CCDS46300.1">
    <molecule id="Q8NDI1-3"/>
</dbReference>
<dbReference type="RefSeq" id="NP_001136086.1">
    <molecule id="Q8NDI1-2"/>
    <property type="nucleotide sequence ID" value="NM_001142614.2"/>
</dbReference>
<dbReference type="RefSeq" id="NP_001136087.1">
    <molecule id="Q8NDI1-3"/>
    <property type="nucleotide sequence ID" value="NM_001142615.3"/>
</dbReference>
<dbReference type="RefSeq" id="NP_001136088.1">
    <molecule id="Q8NDI1-3"/>
    <property type="nucleotide sequence ID" value="NM_001142616.3"/>
</dbReference>
<dbReference type="RefSeq" id="NP_001341141.1">
    <molecule id="Q8NDI1-1"/>
    <property type="nucleotide sequence ID" value="NM_001354212.1"/>
</dbReference>
<dbReference type="RefSeq" id="NP_001341142.1">
    <molecule id="Q8NDI1-1"/>
    <property type="nucleotide sequence ID" value="NM_001354213.1"/>
</dbReference>
<dbReference type="RefSeq" id="NP_001341143.1">
    <molecule id="Q8NDI1-1"/>
    <property type="nucleotide sequence ID" value="NM_001354214.1"/>
</dbReference>
<dbReference type="RefSeq" id="NP_001341147.1">
    <molecule id="Q8NDI1-3"/>
    <property type="nucleotide sequence ID" value="NM_001354218.1"/>
</dbReference>
<dbReference type="RefSeq" id="NP_056067.2">
    <molecule id="Q8NDI1-1"/>
    <property type="nucleotide sequence ID" value="NM_015252.5"/>
</dbReference>
<dbReference type="RefSeq" id="XP_005264282.1">
    <property type="nucleotide sequence ID" value="XM_005264225.2"/>
</dbReference>
<dbReference type="RefSeq" id="XP_005264283.1">
    <molecule id="Q8NDI1-1"/>
    <property type="nucleotide sequence ID" value="XM_005264226.4"/>
</dbReference>
<dbReference type="RefSeq" id="XP_005264284.1">
    <molecule id="Q8NDI1-2"/>
    <property type="nucleotide sequence ID" value="XM_005264227.2"/>
</dbReference>
<dbReference type="RefSeq" id="XP_011531015.1">
    <property type="nucleotide sequence ID" value="XM_011532713.2"/>
</dbReference>
<dbReference type="RefSeq" id="XP_011531016.1">
    <property type="nucleotide sequence ID" value="XM_011532714.2"/>
</dbReference>
<dbReference type="RefSeq" id="XP_011531017.1">
    <molecule id="Q8NDI1-1"/>
    <property type="nucleotide sequence ID" value="XM_011532715.4"/>
</dbReference>
<dbReference type="RefSeq" id="XP_016859132.1">
    <property type="nucleotide sequence ID" value="XM_017003643.1"/>
</dbReference>
<dbReference type="RefSeq" id="XP_016859133.1">
    <property type="nucleotide sequence ID" value="XM_017003644.1"/>
</dbReference>
<dbReference type="RefSeq" id="XP_016859136.1">
    <property type="nucleotide sequence ID" value="XM_017003647.1"/>
</dbReference>
<dbReference type="RefSeq" id="XP_016859137.1">
    <property type="nucleotide sequence ID" value="XM_017003648.1"/>
</dbReference>
<dbReference type="RefSeq" id="XP_016859138.1">
    <property type="nucleotide sequence ID" value="XM_017003649.1"/>
</dbReference>
<dbReference type="RefSeq" id="XP_016859140.1">
    <property type="nucleotide sequence ID" value="XM_017003651.1"/>
</dbReference>
<dbReference type="RefSeq" id="XP_047299700.1">
    <molecule id="Q8NDI1-1"/>
    <property type="nucleotide sequence ID" value="XM_047443744.1"/>
</dbReference>
<dbReference type="RefSeq" id="XP_047299701.1">
    <molecule id="Q8NDI1-1"/>
    <property type="nucleotide sequence ID" value="XM_047443745.1"/>
</dbReference>
<dbReference type="RefSeq" id="XP_047299702.1">
    <molecule id="Q8NDI1-2"/>
    <property type="nucleotide sequence ID" value="XM_047443746.1"/>
</dbReference>
<dbReference type="RefSeq" id="XP_047299703.1">
    <molecule id="Q8NDI1-2"/>
    <property type="nucleotide sequence ID" value="XM_047443747.1"/>
</dbReference>
<dbReference type="RefSeq" id="XP_047299704.1">
    <molecule id="Q8NDI1-2"/>
    <property type="nucleotide sequence ID" value="XM_047443748.1"/>
</dbReference>
<dbReference type="RefSeq" id="XP_047299705.1">
    <molecule id="Q8NDI1-2"/>
    <property type="nucleotide sequence ID" value="XM_047443749.1"/>
</dbReference>
<dbReference type="RefSeq" id="XP_047299711.1">
    <molecule id="Q8NDI1-3"/>
    <property type="nucleotide sequence ID" value="XM_047443755.1"/>
</dbReference>
<dbReference type="RefSeq" id="XP_047299712.1">
    <molecule id="Q8NDI1-3"/>
    <property type="nucleotide sequence ID" value="XM_047443756.1"/>
</dbReference>
<dbReference type="RefSeq" id="XP_047299713.1">
    <molecule id="Q8NDI1-3"/>
    <property type="nucleotide sequence ID" value="XM_047443757.1"/>
</dbReference>
<dbReference type="RefSeq" id="XP_054197058.1">
    <molecule id="Q8NDI1-1"/>
    <property type="nucleotide sequence ID" value="XM_054341083.1"/>
</dbReference>
<dbReference type="RefSeq" id="XP_054197059.1">
    <molecule id="Q8NDI1-1"/>
    <property type="nucleotide sequence ID" value="XM_054341084.1"/>
</dbReference>
<dbReference type="RefSeq" id="XP_054197060.1">
    <molecule id="Q8NDI1-1"/>
    <property type="nucleotide sequence ID" value="XM_054341085.1"/>
</dbReference>
<dbReference type="RefSeq" id="XP_054197061.1">
    <molecule id="Q8NDI1-1"/>
    <property type="nucleotide sequence ID" value="XM_054341086.1"/>
</dbReference>
<dbReference type="RefSeq" id="XP_054197062.1">
    <molecule id="Q8NDI1-2"/>
    <property type="nucleotide sequence ID" value="XM_054341087.1"/>
</dbReference>
<dbReference type="RefSeq" id="XP_054197063.1">
    <molecule id="Q8NDI1-2"/>
    <property type="nucleotide sequence ID" value="XM_054341088.1"/>
</dbReference>
<dbReference type="RefSeq" id="XP_054197064.1">
    <molecule id="Q8NDI1-2"/>
    <property type="nucleotide sequence ID" value="XM_054341089.1"/>
</dbReference>
<dbReference type="RefSeq" id="XP_054197065.1">
    <molecule id="Q8NDI1-2"/>
    <property type="nucleotide sequence ID" value="XM_054341090.1"/>
</dbReference>
<dbReference type="RefSeq" id="XP_054197066.1">
    <molecule id="Q8NDI1-2"/>
    <property type="nucleotide sequence ID" value="XM_054341091.1"/>
</dbReference>
<dbReference type="RefSeq" id="XP_054197075.1">
    <molecule id="Q8NDI1-3"/>
    <property type="nucleotide sequence ID" value="XM_054341100.1"/>
</dbReference>
<dbReference type="RefSeq" id="XP_054197076.1">
    <molecule id="Q8NDI1-3"/>
    <property type="nucleotide sequence ID" value="XM_054341101.1"/>
</dbReference>
<dbReference type="RefSeq" id="XP_054197077.1">
    <molecule id="Q8NDI1-3"/>
    <property type="nucleotide sequence ID" value="XM_054341102.1"/>
</dbReference>
<dbReference type="PDB" id="2D89">
    <property type="method" value="NMR"/>
    <property type="chains" value="A=443-548"/>
</dbReference>
<dbReference type="PDB" id="6ZSH">
    <property type="method" value="X-ray"/>
    <property type="resolution" value="2.20 A"/>
    <property type="chains" value="A/C=1060-1162, B/D=440-550"/>
</dbReference>
<dbReference type="PDB" id="6ZSI">
    <property type="method" value="X-ray"/>
    <property type="resolution" value="1.91 A"/>
    <property type="chains" value="C/D=1060-1212"/>
</dbReference>
<dbReference type="PDB" id="6ZSJ">
    <property type="method" value="X-ray"/>
    <property type="resolution" value="2.00 A"/>
    <property type="chains" value="C/D=1060-1212"/>
</dbReference>
<dbReference type="PDBsum" id="2D89"/>
<dbReference type="PDBsum" id="6ZSH"/>
<dbReference type="PDBsum" id="6ZSI"/>
<dbReference type="PDBsum" id="6ZSJ"/>
<dbReference type="BMRB" id="Q8NDI1"/>
<dbReference type="SMR" id="Q8NDI1"/>
<dbReference type="BioGRID" id="116893">
    <property type="interactions" value="137"/>
</dbReference>
<dbReference type="CORUM" id="Q8NDI1"/>
<dbReference type="ELM" id="Q8NDI1"/>
<dbReference type="FunCoup" id="Q8NDI1">
    <property type="interactions" value="3002"/>
</dbReference>
<dbReference type="IntAct" id="Q8NDI1">
    <property type="interactions" value="55"/>
</dbReference>
<dbReference type="MINT" id="Q8NDI1"/>
<dbReference type="STRING" id="9606.ENSP00000263991"/>
<dbReference type="GlyGen" id="Q8NDI1">
    <property type="glycosylation" value="2 sites, 1 N-linked glycan (1 site), 1 O-linked glycan (1 site)"/>
</dbReference>
<dbReference type="iPTMnet" id="Q8NDI1"/>
<dbReference type="MetOSite" id="Q8NDI1"/>
<dbReference type="PhosphoSitePlus" id="Q8NDI1"/>
<dbReference type="BioMuta" id="EHBP1"/>
<dbReference type="DMDM" id="223590228"/>
<dbReference type="jPOST" id="Q8NDI1"/>
<dbReference type="MassIVE" id="Q8NDI1"/>
<dbReference type="PaxDb" id="9606-ENSP00000263991"/>
<dbReference type="PeptideAtlas" id="Q8NDI1"/>
<dbReference type="ProteomicsDB" id="73032">
    <molecule id="Q8NDI1-1"/>
</dbReference>
<dbReference type="ProteomicsDB" id="73033">
    <molecule id="Q8NDI1-2"/>
</dbReference>
<dbReference type="ProteomicsDB" id="73034">
    <molecule id="Q8NDI1-3"/>
</dbReference>
<dbReference type="Pumba" id="Q8NDI1"/>
<dbReference type="Antibodypedia" id="30724">
    <property type="antibodies" value="79 antibodies from 23 providers"/>
</dbReference>
<dbReference type="DNASU" id="23301"/>
<dbReference type="Ensembl" id="ENST00000263991.9">
    <molecule id="Q8NDI1-1"/>
    <property type="protein sequence ID" value="ENSP00000263991.5"/>
    <property type="gene ID" value="ENSG00000115504.15"/>
</dbReference>
<dbReference type="Ensembl" id="ENST00000405015.7">
    <molecule id="Q8NDI1-3"/>
    <property type="protein sequence ID" value="ENSP00000384143.3"/>
    <property type="gene ID" value="ENSG00000115504.15"/>
</dbReference>
<dbReference type="Ensembl" id="ENST00000405289.5">
    <molecule id="Q8NDI1-2"/>
    <property type="protein sequence ID" value="ENSP00000385524.1"/>
    <property type="gene ID" value="ENSG00000115504.15"/>
</dbReference>
<dbReference type="Ensembl" id="ENST00000431489.6">
    <molecule id="Q8NDI1-3"/>
    <property type="protein sequence ID" value="ENSP00000403783.1"/>
    <property type="gene ID" value="ENSG00000115504.15"/>
</dbReference>
<dbReference type="GeneID" id="23301"/>
<dbReference type="KEGG" id="hsa:23301"/>
<dbReference type="MANE-Select" id="ENST00000431489.6">
    <molecule id="Q8NDI1-3"/>
    <property type="protein sequence ID" value="ENSP00000403783.1"/>
    <property type="RefSeq nucleotide sequence ID" value="NM_001142616.3"/>
    <property type="RefSeq protein sequence ID" value="NP_001136088.1"/>
</dbReference>
<dbReference type="UCSC" id="uc002sby.4">
    <molecule id="Q8NDI1-1"/>
    <property type="organism name" value="human"/>
</dbReference>
<dbReference type="AGR" id="HGNC:29144"/>
<dbReference type="CTD" id="23301"/>
<dbReference type="DisGeNET" id="23301"/>
<dbReference type="GeneCards" id="EHBP1"/>
<dbReference type="HGNC" id="HGNC:29144">
    <property type="gene designation" value="EHBP1"/>
</dbReference>
<dbReference type="HPA" id="ENSG00000115504">
    <property type="expression patterns" value="Low tissue specificity"/>
</dbReference>
<dbReference type="MalaCards" id="EHBP1"/>
<dbReference type="MIM" id="609922">
    <property type="type" value="gene"/>
</dbReference>
<dbReference type="MIM" id="611868">
    <property type="type" value="phenotype"/>
</dbReference>
<dbReference type="neXtProt" id="NX_Q8NDI1"/>
<dbReference type="OpenTargets" id="ENSG00000115504"/>
<dbReference type="PharmGKB" id="PA128394620"/>
<dbReference type="VEuPathDB" id="HostDB:ENSG00000115504"/>
<dbReference type="eggNOG" id="KOG0035">
    <property type="taxonomic scope" value="Eukaryota"/>
</dbReference>
<dbReference type="GeneTree" id="ENSGT00940000157597"/>
<dbReference type="HOGENOM" id="CLU_004178_1_1_1"/>
<dbReference type="InParanoid" id="Q8NDI1"/>
<dbReference type="OMA" id="QQSSCDN"/>
<dbReference type="OrthoDB" id="5972258at2759"/>
<dbReference type="PAN-GO" id="Q8NDI1">
    <property type="GO annotations" value="3 GO annotations based on evolutionary models"/>
</dbReference>
<dbReference type="PhylomeDB" id="Q8NDI1"/>
<dbReference type="TreeFam" id="TF105382"/>
<dbReference type="PathwayCommons" id="Q8NDI1"/>
<dbReference type="SignaLink" id="Q8NDI1"/>
<dbReference type="BioGRID-ORCS" id="23301">
    <property type="hits" value="10 hits in 1156 CRISPR screens"/>
</dbReference>
<dbReference type="ChiTaRS" id="EHBP1">
    <property type="organism name" value="human"/>
</dbReference>
<dbReference type="EvolutionaryTrace" id="Q8NDI1"/>
<dbReference type="GenomeRNAi" id="23301"/>
<dbReference type="Pharos" id="Q8NDI1">
    <property type="development level" value="Tbio"/>
</dbReference>
<dbReference type="PRO" id="PR:Q8NDI1"/>
<dbReference type="Proteomes" id="UP000005640">
    <property type="component" value="Chromosome 2"/>
</dbReference>
<dbReference type="RNAct" id="Q8NDI1">
    <property type="molecule type" value="protein"/>
</dbReference>
<dbReference type="Bgee" id="ENSG00000115504">
    <property type="expression patterns" value="Expressed in sural nerve and 209 other cell types or tissues"/>
</dbReference>
<dbReference type="ExpressionAtlas" id="Q8NDI1">
    <property type="expression patterns" value="baseline and differential"/>
</dbReference>
<dbReference type="GO" id="GO:0005829">
    <property type="term" value="C:cytosol"/>
    <property type="evidence" value="ECO:0000314"/>
    <property type="project" value="HPA"/>
</dbReference>
<dbReference type="GO" id="GO:0005768">
    <property type="term" value="C:endosome"/>
    <property type="evidence" value="ECO:0007669"/>
    <property type="project" value="UniProtKB-SubCell"/>
</dbReference>
<dbReference type="GO" id="GO:0005654">
    <property type="term" value="C:nucleoplasm"/>
    <property type="evidence" value="ECO:0000314"/>
    <property type="project" value="HPA"/>
</dbReference>
<dbReference type="GO" id="GO:0005886">
    <property type="term" value="C:plasma membrane"/>
    <property type="evidence" value="ECO:0000314"/>
    <property type="project" value="HPA"/>
</dbReference>
<dbReference type="GO" id="GO:0006897">
    <property type="term" value="P:endocytosis"/>
    <property type="evidence" value="ECO:0007669"/>
    <property type="project" value="UniProtKB-KW"/>
</dbReference>
<dbReference type="GO" id="GO:0015031">
    <property type="term" value="P:protein transport"/>
    <property type="evidence" value="ECO:0007669"/>
    <property type="project" value="UniProtKB-KW"/>
</dbReference>
<dbReference type="CDD" id="cd21254">
    <property type="entry name" value="CH_EHBP1"/>
    <property type="match status" value="1"/>
</dbReference>
<dbReference type="FunFam" id="1.10.418.10:FF:000023">
    <property type="entry name" value="EH domain-binding protein 1 isoform X1"/>
    <property type="match status" value="1"/>
</dbReference>
<dbReference type="Gene3D" id="1.10.418.10">
    <property type="entry name" value="Calponin-like domain"/>
    <property type="match status" value="1"/>
</dbReference>
<dbReference type="InterPro" id="IPR022735">
    <property type="entry name" value="bMERB_dom"/>
</dbReference>
<dbReference type="InterPro" id="IPR001715">
    <property type="entry name" value="CH_dom"/>
</dbReference>
<dbReference type="InterPro" id="IPR036872">
    <property type="entry name" value="CH_dom_sf"/>
</dbReference>
<dbReference type="InterPro" id="IPR050540">
    <property type="entry name" value="F-actin_Monoox_Mical"/>
</dbReference>
<dbReference type="InterPro" id="IPR019448">
    <property type="entry name" value="NT-C2"/>
</dbReference>
<dbReference type="PANTHER" id="PTHR23167">
    <property type="entry name" value="CALPONIN HOMOLOGY DOMAIN-CONTAINING PROTEIN DDB_G0272472-RELATED"/>
    <property type="match status" value="1"/>
</dbReference>
<dbReference type="PANTHER" id="PTHR23167:SF43">
    <property type="entry name" value="EH DOMAIN-BINDING PROTEIN 1"/>
    <property type="match status" value="1"/>
</dbReference>
<dbReference type="Pfam" id="PF12130">
    <property type="entry name" value="bMERB_dom"/>
    <property type="match status" value="1"/>
</dbReference>
<dbReference type="Pfam" id="PF00307">
    <property type="entry name" value="CH"/>
    <property type="match status" value="1"/>
</dbReference>
<dbReference type="Pfam" id="PF10358">
    <property type="entry name" value="NT-C2"/>
    <property type="match status" value="1"/>
</dbReference>
<dbReference type="SMART" id="SM00033">
    <property type="entry name" value="CH"/>
    <property type="match status" value="1"/>
</dbReference>
<dbReference type="SMART" id="SM01203">
    <property type="entry name" value="DUF3585"/>
    <property type="match status" value="1"/>
</dbReference>
<dbReference type="SUPFAM" id="SSF47576">
    <property type="entry name" value="Calponin-homology domain, CH-domain"/>
    <property type="match status" value="1"/>
</dbReference>
<dbReference type="PROSITE" id="PS51848">
    <property type="entry name" value="BMERB"/>
    <property type="match status" value="1"/>
</dbReference>
<dbReference type="PROSITE" id="PS51840">
    <property type="entry name" value="C2_NT"/>
    <property type="match status" value="1"/>
</dbReference>
<dbReference type="PROSITE" id="PS50021">
    <property type="entry name" value="CH"/>
    <property type="match status" value="1"/>
</dbReference>
<reference key="1">
    <citation type="journal article" date="2004" name="J. Biol. Chem.">
        <title>EHD2 and the novel EH domain binding protein EHBP1 couple endocytosis to the actin cytoskeleton.</title>
        <authorList>
            <person name="Guilherme A."/>
            <person name="Soriano N.A."/>
            <person name="Bose S."/>
            <person name="Holik J."/>
            <person name="Bose A."/>
            <person name="Pomerleau D.P."/>
            <person name="Furcinitti P."/>
            <person name="Leszyk J."/>
            <person name="Corvera S."/>
            <person name="Czech M.P."/>
        </authorList>
    </citation>
    <scope>NUCLEOTIDE SEQUENCE [MRNA] (ISOFORM 2)</scope>
    <scope>FUNCTION</scope>
    <scope>IDENTIFICATION BY MASS SPECTROMETRY</scope>
    <scope>SUBCELLULAR LOCATION</scope>
    <scope>INTERACTION WITH EHD2</scope>
</reference>
<reference key="2">
    <citation type="submission" date="2003-06" db="EMBL/GenBank/DDBJ databases">
        <title>Functional analysis of NACSIN (KIAA0903) in membrane trafficking.</title>
        <authorList>
            <person name="Castellano-Munoz M."/>
            <person name="Fernandez-Chacon R."/>
        </authorList>
    </citation>
    <scope>NUCLEOTIDE SEQUENCE [MRNA] (ISOFORM 1)</scope>
</reference>
<reference key="3">
    <citation type="journal article" date="2007" name="BMC Genomics">
        <title>The full-ORF clone resource of the German cDNA consortium.</title>
        <authorList>
            <person name="Bechtel S."/>
            <person name="Rosenfelder H."/>
            <person name="Duda A."/>
            <person name="Schmidt C.P."/>
            <person name="Ernst U."/>
            <person name="Wellenreuther R."/>
            <person name="Mehrle A."/>
            <person name="Schuster C."/>
            <person name="Bahr A."/>
            <person name="Bloecker H."/>
            <person name="Heubner D."/>
            <person name="Hoerlein A."/>
            <person name="Michel G."/>
            <person name="Wedler H."/>
            <person name="Koehrer K."/>
            <person name="Ottenwaelder B."/>
            <person name="Poustka A."/>
            <person name="Wiemann S."/>
            <person name="Schupp I."/>
        </authorList>
    </citation>
    <scope>NUCLEOTIDE SEQUENCE [LARGE SCALE MRNA] (ISOFORM 1)</scope>
    <source>
        <tissue>Kidney</tissue>
    </source>
</reference>
<reference key="4">
    <citation type="journal article" date="2005" name="Nature">
        <title>Generation and annotation of the DNA sequences of human chromosomes 2 and 4.</title>
        <authorList>
            <person name="Hillier L.W."/>
            <person name="Graves T.A."/>
            <person name="Fulton R.S."/>
            <person name="Fulton L.A."/>
            <person name="Pepin K.H."/>
            <person name="Minx P."/>
            <person name="Wagner-McPherson C."/>
            <person name="Layman D."/>
            <person name="Wylie K."/>
            <person name="Sekhon M."/>
            <person name="Becker M.C."/>
            <person name="Fewell G.A."/>
            <person name="Delehaunty K.D."/>
            <person name="Miner T.L."/>
            <person name="Nash W.E."/>
            <person name="Kremitzki C."/>
            <person name="Oddy L."/>
            <person name="Du H."/>
            <person name="Sun H."/>
            <person name="Bradshaw-Cordum H."/>
            <person name="Ali J."/>
            <person name="Carter J."/>
            <person name="Cordes M."/>
            <person name="Harris A."/>
            <person name="Isak A."/>
            <person name="van Brunt A."/>
            <person name="Nguyen C."/>
            <person name="Du F."/>
            <person name="Courtney L."/>
            <person name="Kalicki J."/>
            <person name="Ozersky P."/>
            <person name="Abbott S."/>
            <person name="Armstrong J."/>
            <person name="Belter E.A."/>
            <person name="Caruso L."/>
            <person name="Cedroni M."/>
            <person name="Cotton M."/>
            <person name="Davidson T."/>
            <person name="Desai A."/>
            <person name="Elliott G."/>
            <person name="Erb T."/>
            <person name="Fronick C."/>
            <person name="Gaige T."/>
            <person name="Haakenson W."/>
            <person name="Haglund K."/>
            <person name="Holmes A."/>
            <person name="Harkins R."/>
            <person name="Kim K."/>
            <person name="Kruchowski S.S."/>
            <person name="Strong C.M."/>
            <person name="Grewal N."/>
            <person name="Goyea E."/>
            <person name="Hou S."/>
            <person name="Levy A."/>
            <person name="Martinka S."/>
            <person name="Mead K."/>
            <person name="McLellan M.D."/>
            <person name="Meyer R."/>
            <person name="Randall-Maher J."/>
            <person name="Tomlinson C."/>
            <person name="Dauphin-Kohlberg S."/>
            <person name="Kozlowicz-Reilly A."/>
            <person name="Shah N."/>
            <person name="Swearengen-Shahid S."/>
            <person name="Snider J."/>
            <person name="Strong J.T."/>
            <person name="Thompson J."/>
            <person name="Yoakum M."/>
            <person name="Leonard S."/>
            <person name="Pearman C."/>
            <person name="Trani L."/>
            <person name="Radionenko M."/>
            <person name="Waligorski J.E."/>
            <person name="Wang C."/>
            <person name="Rock S.M."/>
            <person name="Tin-Wollam A.-M."/>
            <person name="Maupin R."/>
            <person name="Latreille P."/>
            <person name="Wendl M.C."/>
            <person name="Yang S.-P."/>
            <person name="Pohl C."/>
            <person name="Wallis J.W."/>
            <person name="Spieth J."/>
            <person name="Bieri T.A."/>
            <person name="Berkowicz N."/>
            <person name="Nelson J.O."/>
            <person name="Osborne J."/>
            <person name="Ding L."/>
            <person name="Meyer R."/>
            <person name="Sabo A."/>
            <person name="Shotland Y."/>
            <person name="Sinha P."/>
            <person name="Wohldmann P.E."/>
            <person name="Cook L.L."/>
            <person name="Hickenbotham M.T."/>
            <person name="Eldred J."/>
            <person name="Williams D."/>
            <person name="Jones T.A."/>
            <person name="She X."/>
            <person name="Ciccarelli F.D."/>
            <person name="Izaurralde E."/>
            <person name="Taylor J."/>
            <person name="Schmutz J."/>
            <person name="Myers R.M."/>
            <person name="Cox D.R."/>
            <person name="Huang X."/>
            <person name="McPherson J.D."/>
            <person name="Mardis E.R."/>
            <person name="Clifton S.W."/>
            <person name="Warren W.C."/>
            <person name="Chinwalla A.T."/>
            <person name="Eddy S.R."/>
            <person name="Marra M.A."/>
            <person name="Ovcharenko I."/>
            <person name="Furey T.S."/>
            <person name="Miller W."/>
            <person name="Eichler E.E."/>
            <person name="Bork P."/>
            <person name="Suyama M."/>
            <person name="Torrents D."/>
            <person name="Waterston R.H."/>
            <person name="Wilson R.K."/>
        </authorList>
    </citation>
    <scope>NUCLEOTIDE SEQUENCE [LARGE SCALE GENOMIC DNA]</scope>
</reference>
<reference key="5">
    <citation type="journal article" date="2004" name="Genome Res.">
        <title>The status, quality, and expansion of the NIH full-length cDNA project: the Mammalian Gene Collection (MGC).</title>
        <authorList>
            <consortium name="The MGC Project Team"/>
        </authorList>
    </citation>
    <scope>NUCLEOTIDE SEQUENCE [LARGE SCALE MRNA] (ISOFORM 3)</scope>
    <source>
        <tissue>Placenta</tissue>
        <tissue>Uterus</tissue>
    </source>
</reference>
<reference key="6">
    <citation type="journal article" date="2004" name="Nat. Genet.">
        <title>Complete sequencing and characterization of 21,243 full-length human cDNAs.</title>
        <authorList>
            <person name="Ota T."/>
            <person name="Suzuki Y."/>
            <person name="Nishikawa T."/>
            <person name="Otsuki T."/>
            <person name="Sugiyama T."/>
            <person name="Irie R."/>
            <person name="Wakamatsu A."/>
            <person name="Hayashi K."/>
            <person name="Sato H."/>
            <person name="Nagai K."/>
            <person name="Kimura K."/>
            <person name="Makita H."/>
            <person name="Sekine M."/>
            <person name="Obayashi M."/>
            <person name="Nishi T."/>
            <person name="Shibahara T."/>
            <person name="Tanaka T."/>
            <person name="Ishii S."/>
            <person name="Yamamoto J."/>
            <person name="Saito K."/>
            <person name="Kawai Y."/>
            <person name="Isono Y."/>
            <person name="Nakamura Y."/>
            <person name="Nagahari K."/>
            <person name="Murakami K."/>
            <person name="Yasuda T."/>
            <person name="Iwayanagi T."/>
            <person name="Wagatsuma M."/>
            <person name="Shiratori A."/>
            <person name="Sudo H."/>
            <person name="Hosoiri T."/>
            <person name="Kaku Y."/>
            <person name="Kodaira H."/>
            <person name="Kondo H."/>
            <person name="Sugawara M."/>
            <person name="Takahashi M."/>
            <person name="Kanda K."/>
            <person name="Yokoi T."/>
            <person name="Furuya T."/>
            <person name="Kikkawa E."/>
            <person name="Omura Y."/>
            <person name="Abe K."/>
            <person name="Kamihara K."/>
            <person name="Katsuta N."/>
            <person name="Sato K."/>
            <person name="Tanikawa M."/>
            <person name="Yamazaki M."/>
            <person name="Ninomiya K."/>
            <person name="Ishibashi T."/>
            <person name="Yamashita H."/>
            <person name="Murakawa K."/>
            <person name="Fujimori K."/>
            <person name="Tanai H."/>
            <person name="Kimata M."/>
            <person name="Watanabe M."/>
            <person name="Hiraoka S."/>
            <person name="Chiba Y."/>
            <person name="Ishida S."/>
            <person name="Ono Y."/>
            <person name="Takiguchi S."/>
            <person name="Watanabe S."/>
            <person name="Yosida M."/>
            <person name="Hotuta T."/>
            <person name="Kusano J."/>
            <person name="Kanehori K."/>
            <person name="Takahashi-Fujii A."/>
            <person name="Hara H."/>
            <person name="Tanase T.-O."/>
            <person name="Nomura Y."/>
            <person name="Togiya S."/>
            <person name="Komai F."/>
            <person name="Hara R."/>
            <person name="Takeuchi K."/>
            <person name="Arita M."/>
            <person name="Imose N."/>
            <person name="Musashino K."/>
            <person name="Yuuki H."/>
            <person name="Oshima A."/>
            <person name="Sasaki N."/>
            <person name="Aotsuka S."/>
            <person name="Yoshikawa Y."/>
            <person name="Matsunawa H."/>
            <person name="Ichihara T."/>
            <person name="Shiohata N."/>
            <person name="Sano S."/>
            <person name="Moriya S."/>
            <person name="Momiyama H."/>
            <person name="Satoh N."/>
            <person name="Takami S."/>
            <person name="Terashima Y."/>
            <person name="Suzuki O."/>
            <person name="Nakagawa S."/>
            <person name="Senoh A."/>
            <person name="Mizoguchi H."/>
            <person name="Goto Y."/>
            <person name="Shimizu F."/>
            <person name="Wakebe H."/>
            <person name="Hishigaki H."/>
            <person name="Watanabe T."/>
            <person name="Sugiyama A."/>
            <person name="Takemoto M."/>
            <person name="Kawakami B."/>
            <person name="Yamazaki M."/>
            <person name="Watanabe K."/>
            <person name="Kumagai A."/>
            <person name="Itakura S."/>
            <person name="Fukuzumi Y."/>
            <person name="Fujimori Y."/>
            <person name="Komiyama M."/>
            <person name="Tashiro H."/>
            <person name="Tanigami A."/>
            <person name="Fujiwara T."/>
            <person name="Ono T."/>
            <person name="Yamada K."/>
            <person name="Fujii Y."/>
            <person name="Ozaki K."/>
            <person name="Hirao M."/>
            <person name="Ohmori Y."/>
            <person name="Kawabata A."/>
            <person name="Hikiji T."/>
            <person name="Kobatake N."/>
            <person name="Inagaki H."/>
            <person name="Ikema Y."/>
            <person name="Okamoto S."/>
            <person name="Okitani R."/>
            <person name="Kawakami T."/>
            <person name="Noguchi S."/>
            <person name="Itoh T."/>
            <person name="Shigeta K."/>
            <person name="Senba T."/>
            <person name="Matsumura K."/>
            <person name="Nakajima Y."/>
            <person name="Mizuno T."/>
            <person name="Morinaga M."/>
            <person name="Sasaki M."/>
            <person name="Togashi T."/>
            <person name="Oyama M."/>
            <person name="Hata H."/>
            <person name="Watanabe M."/>
            <person name="Komatsu T."/>
            <person name="Mizushima-Sugano J."/>
            <person name="Satoh T."/>
            <person name="Shirai Y."/>
            <person name="Takahashi Y."/>
            <person name="Nakagawa K."/>
            <person name="Okumura K."/>
            <person name="Nagase T."/>
            <person name="Nomura N."/>
            <person name="Kikuchi H."/>
            <person name="Masuho Y."/>
            <person name="Yamashita R."/>
            <person name="Nakai K."/>
            <person name="Yada T."/>
            <person name="Nakamura Y."/>
            <person name="Ohara O."/>
            <person name="Isogai T."/>
            <person name="Sugano S."/>
        </authorList>
    </citation>
    <scope>NUCLEOTIDE SEQUENCE [LARGE SCALE MRNA] OF 1-341 (ISOFORM 2)</scope>
    <source>
        <tissue>Adipose tissue</tissue>
    </source>
</reference>
<reference key="7">
    <citation type="journal article" date="1998" name="DNA Res.">
        <title>Prediction of the coding sequences of unidentified human genes. XII. The complete sequences of 100 new cDNA clones from brain which code for large proteins in vitro.</title>
        <authorList>
            <person name="Nagase T."/>
            <person name="Ishikawa K."/>
            <person name="Suyama M."/>
            <person name="Kikuno R."/>
            <person name="Hirosawa M."/>
            <person name="Miyajima N."/>
            <person name="Tanaka A."/>
            <person name="Kotani H."/>
            <person name="Nomura N."/>
            <person name="Ohara O."/>
        </authorList>
    </citation>
    <scope>NUCLEOTIDE SEQUENCE [LARGE SCALE MRNA] OF 270-1231</scope>
    <source>
        <tissue>Brain</tissue>
    </source>
</reference>
<reference key="8">
    <citation type="journal article" date="2008" name="J. Proteome Res.">
        <title>Combining protein-based IMAC, peptide-based IMAC, and MudPIT for efficient phosphoproteomic analysis.</title>
        <authorList>
            <person name="Cantin G.T."/>
            <person name="Yi W."/>
            <person name="Lu B."/>
            <person name="Park S.K."/>
            <person name="Xu T."/>
            <person name="Lee J.-D."/>
            <person name="Yates J.R. III"/>
        </authorList>
    </citation>
    <scope>PHOSPHORYLATION [LARGE SCALE ANALYSIS] AT SER-436</scope>
    <scope>IDENTIFICATION BY MASS SPECTROMETRY [LARGE SCALE ANALYSIS]</scope>
    <source>
        <tissue>Cervix carcinoma</tissue>
    </source>
</reference>
<reference key="9">
    <citation type="journal article" date="2008" name="Proc. Natl. Acad. Sci. U.S.A.">
        <title>A quantitative atlas of mitotic phosphorylation.</title>
        <authorList>
            <person name="Dephoure N."/>
            <person name="Zhou C."/>
            <person name="Villen J."/>
            <person name="Beausoleil S.A."/>
            <person name="Bakalarski C.E."/>
            <person name="Elledge S.J."/>
            <person name="Gygi S.P."/>
        </authorList>
    </citation>
    <scope>PHOSPHORYLATION [LARGE SCALE ANALYSIS] AT SER-171; SER-174; SER-177; SER-432; SER-436; SER-710; SER-964 AND SER-1058</scope>
    <scope>IDENTIFICATION BY MASS SPECTROMETRY [LARGE SCALE ANALYSIS]</scope>
    <source>
        <tissue>Cervix carcinoma</tissue>
    </source>
</reference>
<reference key="10">
    <citation type="journal article" date="2009" name="Anal. Chem.">
        <title>Lys-N and trypsin cover complementary parts of the phosphoproteome in a refined SCX-based approach.</title>
        <authorList>
            <person name="Gauci S."/>
            <person name="Helbig A.O."/>
            <person name="Slijper M."/>
            <person name="Krijgsveld J."/>
            <person name="Heck A.J."/>
            <person name="Mohammed S."/>
        </authorList>
    </citation>
    <scope>IDENTIFICATION BY MASS SPECTROMETRY [LARGE SCALE ANALYSIS]</scope>
</reference>
<reference key="11">
    <citation type="journal article" date="2009" name="Sci. Signal.">
        <title>Quantitative phosphoproteomic analysis of T cell receptor signaling reveals system-wide modulation of protein-protein interactions.</title>
        <authorList>
            <person name="Mayya V."/>
            <person name="Lundgren D.H."/>
            <person name="Hwang S.-I."/>
            <person name="Rezaul K."/>
            <person name="Wu L."/>
            <person name="Eng J.K."/>
            <person name="Rodionov V."/>
            <person name="Han D.K."/>
        </authorList>
    </citation>
    <scope>PHOSPHORYLATION [LARGE SCALE ANALYSIS] AT SER-171; SER-174; SER-432 AND SER-436</scope>
    <scope>IDENTIFICATION BY MASS SPECTROMETRY [LARGE SCALE ANALYSIS]</scope>
    <source>
        <tissue>Leukemic T-cell</tissue>
    </source>
</reference>
<reference key="12">
    <citation type="journal article" date="2010" name="Sci. Signal.">
        <title>Quantitative phosphoproteomics reveals widespread full phosphorylation site occupancy during mitosis.</title>
        <authorList>
            <person name="Olsen J.V."/>
            <person name="Vermeulen M."/>
            <person name="Santamaria A."/>
            <person name="Kumar C."/>
            <person name="Miller M.L."/>
            <person name="Jensen L.J."/>
            <person name="Gnad F."/>
            <person name="Cox J."/>
            <person name="Jensen T.S."/>
            <person name="Nigg E.A."/>
            <person name="Brunak S."/>
            <person name="Mann M."/>
        </authorList>
    </citation>
    <scope>PHOSPHORYLATION [LARGE SCALE ANALYSIS] AT SER-171; SER-174 AND SER-436</scope>
    <scope>IDENTIFICATION BY MASS SPECTROMETRY [LARGE SCALE ANALYSIS]</scope>
    <source>
        <tissue>Cervix carcinoma</tissue>
    </source>
</reference>
<reference key="13">
    <citation type="journal article" date="2011" name="BMC Syst. Biol.">
        <title>Initial characterization of the human central proteome.</title>
        <authorList>
            <person name="Burkard T.R."/>
            <person name="Planyavsky M."/>
            <person name="Kaupe I."/>
            <person name="Breitwieser F.P."/>
            <person name="Buerckstuemmer T."/>
            <person name="Bennett K.L."/>
            <person name="Superti-Furga G."/>
            <person name="Colinge J."/>
        </authorList>
    </citation>
    <scope>IDENTIFICATION BY MASS SPECTROMETRY [LARGE SCALE ANALYSIS]</scope>
</reference>
<reference key="14">
    <citation type="journal article" date="2011" name="Sci. Signal.">
        <title>System-wide temporal characterization of the proteome and phosphoproteome of human embryonic stem cell differentiation.</title>
        <authorList>
            <person name="Rigbolt K.T."/>
            <person name="Prokhorova T.A."/>
            <person name="Akimov V."/>
            <person name="Henningsen J."/>
            <person name="Johansen P.T."/>
            <person name="Kratchmarova I."/>
            <person name="Kassem M."/>
            <person name="Mann M."/>
            <person name="Olsen J.V."/>
            <person name="Blagoev B."/>
        </authorList>
    </citation>
    <scope>PHOSPHORYLATION [LARGE SCALE ANALYSIS] AT SER-436 AND SER-1058</scope>
    <scope>IDENTIFICATION BY MASS SPECTROMETRY [LARGE SCALE ANALYSIS]</scope>
</reference>
<reference key="15">
    <citation type="journal article" date="2013" name="J. Proteome Res.">
        <title>Toward a comprehensive characterization of a human cancer cell phosphoproteome.</title>
        <authorList>
            <person name="Zhou H."/>
            <person name="Di Palma S."/>
            <person name="Preisinger C."/>
            <person name="Peng M."/>
            <person name="Polat A.N."/>
            <person name="Heck A.J."/>
            <person name="Mohammed S."/>
        </authorList>
    </citation>
    <scope>PHOSPHORYLATION [LARGE SCALE ANALYSIS] AT SER-171; SER-302; SER-307; SER-408; SER-428; SER-436; THR-694; SER-781 AND SER-1058</scope>
    <scope>IDENTIFICATION BY MASS SPECTROMETRY [LARGE SCALE ANALYSIS]</scope>
    <source>
        <tissue>Cervix carcinoma</tissue>
        <tissue>Erythroleukemia</tissue>
    </source>
</reference>
<reference key="16">
    <citation type="journal article" date="2014" name="J. Proteomics">
        <title>An enzyme assisted RP-RPLC approach for in-depth analysis of human liver phosphoproteome.</title>
        <authorList>
            <person name="Bian Y."/>
            <person name="Song C."/>
            <person name="Cheng K."/>
            <person name="Dong M."/>
            <person name="Wang F."/>
            <person name="Huang J."/>
            <person name="Sun D."/>
            <person name="Wang L."/>
            <person name="Ye M."/>
            <person name="Zou H."/>
        </authorList>
    </citation>
    <scope>PHOSPHORYLATION [LARGE SCALE ANALYSIS] AT SER-335; SER-432; SER-436; SER-854 AND SER-1058</scope>
    <scope>IDENTIFICATION BY MASS SPECTROMETRY [LARGE SCALE ANALYSIS]</scope>
    <source>
        <tissue>Liver</tissue>
    </source>
</reference>
<reference key="17">
    <citation type="journal article" date="2016" name="Elife">
        <title>bMERB domains are bivalent Rab8 family effectors evolved by gene duplication.</title>
        <authorList>
            <person name="Rai A."/>
            <person name="Oprisko A."/>
            <person name="Campos J."/>
            <person name="Fu Y."/>
            <person name="Friese T."/>
            <person name="Itzen A."/>
            <person name="Goody R.S."/>
            <person name="Gazdag E.M."/>
            <person name="Muller M.P."/>
        </authorList>
    </citation>
    <scope>INTERACTION WITH RAB8A; RAB10; RAB13 AND RAB15</scope>
    <scope>DOMAIN</scope>
    <scope>FUNCTION</scope>
    <scope>ISOPRENYLATION</scope>
    <scope>SUBCELLULAR LOCATION</scope>
</reference>
<reference key="18">
    <citation type="submission" date="2006-06" db="PDB data bank">
        <title>Solution structure of the CH domain from human EH domain binding protein 1.</title>
        <authorList>
            <consortium name="RIKEN structural genomics initiative (RSGI)"/>
        </authorList>
    </citation>
    <scope>STRUCTURE BY NMR OF 443-548</scope>
</reference>
<reference key="19">
    <citation type="journal article" date="2006" name="Science">
        <title>The consensus coding sequences of human breast and colorectal cancers.</title>
        <authorList>
            <person name="Sjoeblom T."/>
            <person name="Jones S."/>
            <person name="Wood L.D."/>
            <person name="Parsons D.W."/>
            <person name="Lin J."/>
            <person name="Barber T.D."/>
            <person name="Mandelker D."/>
            <person name="Leary R.J."/>
            <person name="Ptak J."/>
            <person name="Silliman N."/>
            <person name="Szabo S."/>
            <person name="Buckhaults P."/>
            <person name="Farrell C."/>
            <person name="Meeh P."/>
            <person name="Markowitz S.D."/>
            <person name="Willis J."/>
            <person name="Dawson D."/>
            <person name="Willson J.K.V."/>
            <person name="Gazdar A.F."/>
            <person name="Hartigan J."/>
            <person name="Wu L."/>
            <person name="Liu C."/>
            <person name="Parmigiani G."/>
            <person name="Park B.H."/>
            <person name="Bachman K.E."/>
            <person name="Papadopoulos N."/>
            <person name="Vogelstein B."/>
            <person name="Kinzler K.W."/>
            <person name="Velculescu V.E."/>
        </authorList>
    </citation>
    <scope>VARIANT [LARGE SCALE ANALYSIS] THR-395</scope>
</reference>
<reference key="20">
    <citation type="journal article" date="2008" name="Nat. Genet.">
        <title>Common sequence variants on 2p15 and Xp11.22 confer susceptibility to prostate cancer.</title>
        <authorList>
            <person name="Gudmundsson J."/>
            <person name="Sulem P."/>
            <person name="Rafnar T."/>
            <person name="Bergthorsson J.T."/>
            <person name="Manolescu A."/>
            <person name="Gudbjartsson D."/>
            <person name="Agnarsson B.A."/>
            <person name="Sigurdsson A."/>
            <person name="Benediktsdottir K.R."/>
            <person name="Blondal T."/>
            <person name="Jakobsdottir M."/>
            <person name="Stacey S.N."/>
            <person name="Kostic J."/>
            <person name="Kristinsson K.T."/>
            <person name="Birgisdottir B."/>
            <person name="Ghosh S."/>
            <person name="Magnusdottir D.N."/>
            <person name="Thorlacius S."/>
            <person name="Thorleifsson G."/>
            <person name="Zheng S.L."/>
            <person name="Sun J."/>
            <person name="Chang B.-L."/>
            <person name="Elmore J.B."/>
            <person name="Breyer J.P."/>
            <person name="McReynolds K.M."/>
            <person name="Bradley K.M."/>
            <person name="Yaspan B.L."/>
            <person name="Wiklund F."/>
            <person name="Stattin P."/>
            <person name="Lindstroem S."/>
            <person name="Adami H.-O."/>
            <person name="McDonnell S.K."/>
            <person name="Schaid D.J."/>
            <person name="Cunningham J.M."/>
            <person name="Wang L."/>
            <person name="Cerhan J.R."/>
            <person name="St Sauver J.L."/>
            <person name="Isaacs S.D."/>
            <person name="Wiley K.E."/>
            <person name="Partin A.W."/>
            <person name="Walsh P.C."/>
            <person name="Polo S."/>
            <person name="Ruiz-Echarri M."/>
            <person name="Navarrete S."/>
            <person name="Fuertes F."/>
            <person name="Saez B."/>
            <person name="Godino J."/>
            <person name="Weijerman P.C."/>
            <person name="Swinkels D.W."/>
            <person name="Aben K.K."/>
            <person name="Witjes J.A."/>
            <person name="Suarez B.K."/>
            <person name="Helfand B.T."/>
            <person name="Frigge M.L."/>
            <person name="Kristjansson K."/>
            <person name="Ober C."/>
            <person name="Jonsson E."/>
            <person name="Einarsson G.V."/>
            <person name="Xu J."/>
            <person name="Gronberg H."/>
            <person name="Smith J.R."/>
            <person name="Thibodeau S.N."/>
            <person name="Isaacs W.B."/>
            <person name="Catalona W.J."/>
            <person name="Mayordomo J.I."/>
            <person name="Kiemeney L.A."/>
            <person name="Barkardottir R.B."/>
            <person name="Gulcher J.R."/>
            <person name="Thorsteinsdottir U."/>
            <person name="Kong A."/>
            <person name="Stefansson K."/>
        </authorList>
    </citation>
    <scope>INVOLVEMENT IN SUSCEPTIBILITY TO HEREDITARY PROSTATE CANCER</scope>
</reference>
<name>EHBP1_HUMAN</name>